<dbReference type="EC" id="3.6.4.-" evidence="2"/>
<dbReference type="EMBL" id="CM003151">
    <property type="protein sequence ID" value="KIS67648.1"/>
    <property type="molecule type" value="Genomic_DNA"/>
</dbReference>
<dbReference type="RefSeq" id="XP_011390643.1">
    <property type="nucleotide sequence ID" value="XM_011392341.1"/>
</dbReference>
<dbReference type="FunCoup" id="A0A0D1CLQ4">
    <property type="interactions" value="30"/>
</dbReference>
<dbReference type="STRING" id="237631.A0A0D1CLQ4"/>
<dbReference type="EnsemblFungi" id="KIS67648">
    <property type="protein sequence ID" value="KIS67648"/>
    <property type="gene ID" value="UMAG_04152"/>
</dbReference>
<dbReference type="GeneID" id="23564414"/>
<dbReference type="KEGG" id="uma:UMAG_04152"/>
<dbReference type="VEuPathDB" id="FungiDB:UMAG_04152"/>
<dbReference type="eggNOG" id="KOG0062">
    <property type="taxonomic scope" value="Eukaryota"/>
</dbReference>
<dbReference type="eggNOG" id="KOG1242">
    <property type="taxonomic scope" value="Eukaryota"/>
</dbReference>
<dbReference type="InParanoid" id="A0A0D1CLQ4"/>
<dbReference type="OMA" id="VLSEAMW"/>
<dbReference type="OrthoDB" id="2110130at2759"/>
<dbReference type="UniPathway" id="UPA00345"/>
<dbReference type="Proteomes" id="UP000000561">
    <property type="component" value="Chromosome 12"/>
</dbReference>
<dbReference type="GO" id="GO:0005829">
    <property type="term" value="C:cytosol"/>
    <property type="evidence" value="ECO:0007669"/>
    <property type="project" value="UniProtKB-SubCell"/>
</dbReference>
<dbReference type="GO" id="GO:0005524">
    <property type="term" value="F:ATP binding"/>
    <property type="evidence" value="ECO:0000318"/>
    <property type="project" value="GO_Central"/>
</dbReference>
<dbReference type="GO" id="GO:0016887">
    <property type="term" value="F:ATP hydrolysis activity"/>
    <property type="evidence" value="ECO:0000318"/>
    <property type="project" value="GO_Central"/>
</dbReference>
<dbReference type="GO" id="GO:0003723">
    <property type="term" value="F:RNA binding"/>
    <property type="evidence" value="ECO:0007669"/>
    <property type="project" value="UniProtKB-KW"/>
</dbReference>
<dbReference type="GO" id="GO:0003746">
    <property type="term" value="F:translation elongation factor activity"/>
    <property type="evidence" value="ECO:0000316"/>
    <property type="project" value="UniProtKB"/>
</dbReference>
<dbReference type="GO" id="GO:0002182">
    <property type="term" value="P:cytoplasmic translational elongation"/>
    <property type="evidence" value="ECO:0000316"/>
    <property type="project" value="UniProtKB"/>
</dbReference>
<dbReference type="CDD" id="cd03221">
    <property type="entry name" value="ABCF_EF-3"/>
    <property type="match status" value="1"/>
</dbReference>
<dbReference type="CDD" id="cd18626">
    <property type="entry name" value="CD_eEF3"/>
    <property type="match status" value="1"/>
</dbReference>
<dbReference type="FunFam" id="1.25.10.10:FF:000076">
    <property type="entry name" value="Elongation factor 3"/>
    <property type="match status" value="1"/>
</dbReference>
<dbReference type="FunFam" id="2.40.50.990:FF:000002">
    <property type="entry name" value="mRNA export factor elf1"/>
    <property type="match status" value="1"/>
</dbReference>
<dbReference type="FunFam" id="3.40.50.300:FF:000193">
    <property type="entry name" value="Probable Elongation factor 3"/>
    <property type="match status" value="1"/>
</dbReference>
<dbReference type="Gene3D" id="2.40.50.990">
    <property type="match status" value="1"/>
</dbReference>
<dbReference type="Gene3D" id="1.25.10.10">
    <property type="entry name" value="Leucine-rich Repeat Variant"/>
    <property type="match status" value="1"/>
</dbReference>
<dbReference type="Gene3D" id="3.40.50.300">
    <property type="entry name" value="P-loop containing nucleotide triphosphate hydrolases"/>
    <property type="match status" value="2"/>
</dbReference>
<dbReference type="InterPro" id="IPR003593">
    <property type="entry name" value="AAA+_ATPase"/>
</dbReference>
<dbReference type="InterPro" id="IPR003439">
    <property type="entry name" value="ABC_transporter-like_ATP-bd"/>
</dbReference>
<dbReference type="InterPro" id="IPR017871">
    <property type="entry name" value="ABC_transporter-like_CS"/>
</dbReference>
<dbReference type="InterPro" id="IPR050611">
    <property type="entry name" value="ABCF_EF3_subfamily"/>
</dbReference>
<dbReference type="InterPro" id="IPR011989">
    <property type="entry name" value="ARM-like"/>
</dbReference>
<dbReference type="InterPro" id="IPR016024">
    <property type="entry name" value="ARM-type_fold"/>
</dbReference>
<dbReference type="InterPro" id="IPR000953">
    <property type="entry name" value="Chromo/chromo_shadow_dom"/>
</dbReference>
<dbReference type="InterPro" id="IPR015688">
    <property type="entry name" value="eEF3_ABC2_chromodomain-like"/>
</dbReference>
<dbReference type="InterPro" id="IPR047038">
    <property type="entry name" value="eEF3_chromodomain-like_sf"/>
</dbReference>
<dbReference type="InterPro" id="IPR021133">
    <property type="entry name" value="HEAT_type_2"/>
</dbReference>
<dbReference type="InterPro" id="IPR027417">
    <property type="entry name" value="P-loop_NTPase"/>
</dbReference>
<dbReference type="InterPro" id="IPR034085">
    <property type="entry name" value="TOG"/>
</dbReference>
<dbReference type="PANTHER" id="PTHR19211">
    <property type="entry name" value="ATP-BINDING TRANSPORT PROTEIN-RELATED"/>
    <property type="match status" value="1"/>
</dbReference>
<dbReference type="PANTHER" id="PTHR19211:SF5">
    <property type="entry name" value="ELONGATION FACTOR 3A-RELATED"/>
    <property type="match status" value="1"/>
</dbReference>
<dbReference type="Pfam" id="PF00005">
    <property type="entry name" value="ABC_tran"/>
    <property type="match status" value="2"/>
</dbReference>
<dbReference type="Pfam" id="PF24984">
    <property type="entry name" value="HEAT_EF3_GNC1"/>
    <property type="match status" value="1"/>
</dbReference>
<dbReference type="Pfam" id="PF24987">
    <property type="entry name" value="HEAT_EF3_N"/>
    <property type="match status" value="1"/>
</dbReference>
<dbReference type="SMART" id="SM00382">
    <property type="entry name" value="AAA"/>
    <property type="match status" value="2"/>
</dbReference>
<dbReference type="SMART" id="SM00298">
    <property type="entry name" value="CHROMO"/>
    <property type="match status" value="1"/>
</dbReference>
<dbReference type="SMART" id="SM01349">
    <property type="entry name" value="TOG"/>
    <property type="match status" value="1"/>
</dbReference>
<dbReference type="SUPFAM" id="SSF48371">
    <property type="entry name" value="ARM repeat"/>
    <property type="match status" value="1"/>
</dbReference>
<dbReference type="SUPFAM" id="SSF52540">
    <property type="entry name" value="P-loop containing nucleoside triphosphate hydrolases"/>
    <property type="match status" value="2"/>
</dbReference>
<dbReference type="PROSITE" id="PS00211">
    <property type="entry name" value="ABC_TRANSPORTER_1"/>
    <property type="match status" value="2"/>
</dbReference>
<dbReference type="PROSITE" id="PS50893">
    <property type="entry name" value="ABC_TRANSPORTER_2"/>
    <property type="match status" value="2"/>
</dbReference>
<dbReference type="PROSITE" id="PS50077">
    <property type="entry name" value="HEAT_REPEAT"/>
    <property type="match status" value="1"/>
</dbReference>
<comment type="function">
    <text evidence="2 6">Ribosome-dependent ATPase that functions in cytoplasmic translation elongation (PubMed:39247690). Required for the ATP-dependent release of deacylated tRNA from the ribosomal E-site during protein biosynthesis (By similarity). Stimulates the eEF1A-dependent binding of aminoacyl-tRNA to the ribosomal A-site, which has reduced affinity for tRNA as long as the E-site is occupied (By similarity). Assists translation termination by stimulating the release of nascent protein from the ribosome by release factors (By similarity).</text>
</comment>
<comment type="catalytic activity">
    <reaction evidence="2">
        <text>ATP + H2O = ADP + phosphate + H(+)</text>
        <dbReference type="Rhea" id="RHEA:13065"/>
        <dbReference type="ChEBI" id="CHEBI:15377"/>
        <dbReference type="ChEBI" id="CHEBI:15378"/>
        <dbReference type="ChEBI" id="CHEBI:30616"/>
        <dbReference type="ChEBI" id="CHEBI:43474"/>
        <dbReference type="ChEBI" id="CHEBI:456216"/>
    </reaction>
</comment>
<comment type="pathway">
    <text evidence="1">Protein biosynthesis; polypeptide chain elongation.</text>
</comment>
<comment type="subcellular location">
    <subcellularLocation>
        <location evidence="2">Cytoplasm</location>
        <location evidence="2">Cytosol</location>
    </subcellularLocation>
</comment>
<comment type="similarity">
    <text evidence="7">Belongs to the ABC transporter superfamily. ABCF family. EF3 subfamily.</text>
</comment>
<evidence type="ECO:0000250" key="1">
    <source>
        <dbReference type="UniProtKB" id="O93796"/>
    </source>
</evidence>
<evidence type="ECO:0000250" key="2">
    <source>
        <dbReference type="UniProtKB" id="P16521"/>
    </source>
</evidence>
<evidence type="ECO:0000255" key="3"/>
<evidence type="ECO:0000255" key="4">
    <source>
        <dbReference type="PROSITE-ProRule" id="PRU00434"/>
    </source>
</evidence>
<evidence type="ECO:0000256" key="5">
    <source>
        <dbReference type="SAM" id="MobiDB-lite"/>
    </source>
</evidence>
<evidence type="ECO:0000269" key="6">
    <source>
    </source>
</evidence>
<evidence type="ECO:0000305" key="7"/>
<evidence type="ECO:0000312" key="8">
    <source>
        <dbReference type="EMBL" id="KIS67648.1"/>
    </source>
</evidence>
<evidence type="ECO:0000312" key="9">
    <source>
        <dbReference type="Proteomes" id="UP000000561"/>
    </source>
</evidence>
<feature type="chain" id="PRO_0000461808" description="Elongation factor 3">
    <location>
        <begin position="1"/>
        <end position="1066"/>
    </location>
</feature>
<feature type="repeat" description="HEAT 1" evidence="3">
    <location>
        <begin position="112"/>
        <end position="149"/>
    </location>
</feature>
<feature type="repeat" description="HEAT 2" evidence="3">
    <location>
        <begin position="151"/>
        <end position="188"/>
    </location>
</feature>
<feature type="repeat" description="HEAT 3" evidence="3">
    <location>
        <begin position="192"/>
        <end position="229"/>
    </location>
</feature>
<feature type="repeat" description="HEAT 4" evidence="3">
    <location>
        <begin position="231"/>
        <end position="268"/>
    </location>
</feature>
<feature type="repeat" description="HEAT 5" evidence="3">
    <location>
        <begin position="269"/>
        <end position="306"/>
    </location>
</feature>
<feature type="repeat" description="HEAT 7" evidence="3">
    <location>
        <begin position="312"/>
        <end position="353"/>
    </location>
</feature>
<feature type="domain" description="ABC transporter 1" evidence="4">
    <location>
        <begin position="454"/>
        <end position="672"/>
    </location>
</feature>
<feature type="domain" description="ABC transporter 2" evidence="4">
    <location>
        <begin position="699"/>
        <end position="1015"/>
    </location>
</feature>
<feature type="region of interest" description="Disordered" evidence="5">
    <location>
        <begin position="997"/>
        <end position="1066"/>
    </location>
</feature>
<feature type="compositionally biased region" description="Basic residues" evidence="5">
    <location>
        <begin position="1042"/>
        <end position="1054"/>
    </location>
</feature>
<feature type="binding site" evidence="2">
    <location>
        <position position="418"/>
    </location>
    <ligand>
        <name>ADP</name>
        <dbReference type="ChEBI" id="CHEBI:456216"/>
    </ligand>
</feature>
<feature type="binding site" evidence="2">
    <location>
        <position position="735"/>
    </location>
    <ligand>
        <name>ADP</name>
        <dbReference type="ChEBI" id="CHEBI:456216"/>
    </ligand>
</feature>
<feature type="binding site" evidence="2">
    <location>
        <position position="944"/>
    </location>
    <ligand>
        <name>ADP</name>
        <dbReference type="ChEBI" id="CHEBI:456216"/>
    </ligand>
</feature>
<feature type="binding site" evidence="2">
    <location>
        <position position="947"/>
    </location>
    <ligand>
        <name>ADP</name>
        <dbReference type="ChEBI" id="CHEBI:456216"/>
    </ligand>
</feature>
<feature type="binding site" evidence="2">
    <location>
        <position position="973"/>
    </location>
    <ligand>
        <name>ADP</name>
        <dbReference type="ChEBI" id="CHEBI:456216"/>
    </ligand>
</feature>
<organism>
    <name type="scientific">Mycosarcoma maydis</name>
    <name type="common">Corn smut fungus</name>
    <name type="synonym">Ustilago maydis</name>
    <dbReference type="NCBI Taxonomy" id="5270"/>
    <lineage>
        <taxon>Eukaryota</taxon>
        <taxon>Fungi</taxon>
        <taxon>Dikarya</taxon>
        <taxon>Basidiomycota</taxon>
        <taxon>Ustilaginomycotina</taxon>
        <taxon>Ustilaginomycetes</taxon>
        <taxon>Ustilaginales</taxon>
        <taxon>Ustilaginaceae</taxon>
        <taxon>Mycosarcoma</taxon>
    </lineage>
</organism>
<proteinExistence type="inferred from homology"/>
<accession>A0A0D1CLQ4</accession>
<keyword id="KW-0067">ATP-binding</keyword>
<keyword id="KW-0963">Cytoplasm</keyword>
<keyword id="KW-0251">Elongation factor</keyword>
<keyword id="KW-0378">Hydrolase</keyword>
<keyword id="KW-0547">Nucleotide-binding</keyword>
<keyword id="KW-0648">Protein biosynthesis</keyword>
<keyword id="KW-1185">Reference proteome</keyword>
<keyword id="KW-0677">Repeat</keyword>
<keyword id="KW-0694">RNA-binding</keyword>
<protein>
    <recommendedName>
        <fullName evidence="7">Elongation factor 3</fullName>
        <shortName evidence="7">EF-3</shortName>
        <ecNumber evidence="2">3.6.4.-</ecNumber>
    </recommendedName>
    <alternativeName>
        <fullName evidence="7">Eukaryotic elongation factor 3</fullName>
        <shortName evidence="7">eEF3</shortName>
    </alternativeName>
</protein>
<gene>
    <name evidence="7" type="primary">TEF3</name>
    <name evidence="8" type="ORF">UMAG_04152</name>
</gene>
<reference evidence="9" key="1">
    <citation type="journal article" date="2006" name="Nature">
        <title>Insights from the genome of the biotrophic fungal plant pathogen Ustilago maydis.</title>
        <authorList>
            <person name="Kaemper J."/>
            <person name="Kahmann R."/>
            <person name="Boelker M."/>
            <person name="Ma L.-J."/>
            <person name="Brefort T."/>
            <person name="Saville B.J."/>
            <person name="Banuett F."/>
            <person name="Kronstad J.W."/>
            <person name="Gold S.E."/>
            <person name="Mueller O."/>
            <person name="Perlin M.H."/>
            <person name="Woesten H.A.B."/>
            <person name="de Vries R."/>
            <person name="Ruiz-Herrera J."/>
            <person name="Reynaga-Pena C.G."/>
            <person name="Snetselaar K."/>
            <person name="McCann M."/>
            <person name="Perez-Martin J."/>
            <person name="Feldbruegge M."/>
            <person name="Basse C.W."/>
            <person name="Steinberg G."/>
            <person name="Ibeas J.I."/>
            <person name="Holloman W."/>
            <person name="Guzman P."/>
            <person name="Farman M.L."/>
            <person name="Stajich J.E."/>
            <person name="Sentandreu R."/>
            <person name="Gonzalez-Prieto J.M."/>
            <person name="Kennell J.C."/>
            <person name="Molina L."/>
            <person name="Schirawski J."/>
            <person name="Mendoza-Mendoza A."/>
            <person name="Greilinger D."/>
            <person name="Muench K."/>
            <person name="Roessel N."/>
            <person name="Scherer M."/>
            <person name="Vranes M."/>
            <person name="Ladendorf O."/>
            <person name="Vincon V."/>
            <person name="Fuchs U."/>
            <person name="Sandrock B."/>
            <person name="Meng S."/>
            <person name="Ho E.C.H."/>
            <person name="Cahill M.J."/>
            <person name="Boyce K.J."/>
            <person name="Klose J."/>
            <person name="Klosterman S.J."/>
            <person name="Deelstra H.J."/>
            <person name="Ortiz-Castellanos L."/>
            <person name="Li W."/>
            <person name="Sanchez-Alonso P."/>
            <person name="Schreier P.H."/>
            <person name="Haeuser-Hahn I."/>
            <person name="Vaupel M."/>
            <person name="Koopmann E."/>
            <person name="Friedrich G."/>
            <person name="Voss H."/>
            <person name="Schlueter T."/>
            <person name="Margolis J."/>
            <person name="Platt D."/>
            <person name="Swimmer C."/>
            <person name="Gnirke A."/>
            <person name="Chen F."/>
            <person name="Vysotskaia V."/>
            <person name="Mannhaupt G."/>
            <person name="Gueldener U."/>
            <person name="Muensterkoetter M."/>
            <person name="Haase D."/>
            <person name="Oesterheld M."/>
            <person name="Mewes H.-W."/>
            <person name="Mauceli E.W."/>
            <person name="DeCaprio D."/>
            <person name="Wade C.M."/>
            <person name="Butler J."/>
            <person name="Young S.K."/>
            <person name="Jaffe D.B."/>
            <person name="Calvo S.E."/>
            <person name="Nusbaum C."/>
            <person name="Galagan J.E."/>
            <person name="Birren B.W."/>
        </authorList>
    </citation>
    <scope>NUCLEOTIDE SEQUENCE [LARGE SCALE GENOMIC DNA]</scope>
    <source>
        <strain evidence="9">DSM 14603 / FGSC 9021 / UM521</strain>
    </source>
</reference>
<reference evidence="9" key="2">
    <citation type="submission" date="2014-09" db="EMBL/GenBank/DDBJ databases">
        <authorList>
            <person name="Gueldener U."/>
            <person name="Muensterkoetter M."/>
            <person name="Walter M.C."/>
            <person name="Mannhaupt G."/>
            <person name="Kahmann R."/>
        </authorList>
    </citation>
    <scope>GENOME REANNOTATION</scope>
    <source>
        <strain evidence="9">DSM 14603 / FGSC 9021 / UM521</strain>
    </source>
</reference>
<reference evidence="7" key="3">
    <citation type="journal article" date="2024" name="Front. Microbiol.">
        <title>The gene YEF3 function encoding translation elongation factor eEF3 is partially conserved across fungi.</title>
        <authorList>
            <person name="Maldonado G."/>
            <person name="Garcia A."/>
            <person name="Herrero S."/>
            <person name="Castano I."/>
            <person name="Altmann M."/>
            <person name="Fischer R."/>
            <person name="Hernandez G."/>
        </authorList>
    </citation>
    <scope>FUNCTION</scope>
</reference>
<name>EF3_MYCMD</name>
<sequence length="1066" mass="116941">MAPAPSAAGVPATVPAKAVKGAAGAAAKAGAAAEKKEASAETDALLSGDKDAAQELTNLVKIEGPAALANLGIEAVILKGLGDKKNATAREGACTLLANLCEQGVGHEVEPFIFENVLNSLVEAMGDKEKAVQKASLETLKAFVRVMSPWAAQQVLKVVLHQARTAGKWQVKTGCVALLEEMVTACPERMAALMPEIIPVMTEVIWDTKTDVQKASRAALTKLCALISNKDIERFIPALINSLIHPVEEVPKTIQLLSATTFVQEVDSATLALMVPLLSRGLNERPTATKRKVAVIIDNMTKLVDNERTVRPFLGKLLPGLIKIESTLADPEARSVVQRAIKTLREVGKVTGDGSDVKPLEDVDIKATQEQVNKALGEQSLQAQADLSSYLAVLVANLANARNFELTEWESTLIPYITLIKGSKPEQAKAVAKSLLTALAKSTGDTVEIFDDEEEGEDLCNCQFSLAYGAKILLNTATLRLKRGHKYGLCGRNGSGKSTLMRAITNGQVEGFPSPDEVRTWYVEHDLDGSEGLMTVLEFILADERLSMTRDEAVATLHEVGFDDARQNSPIAGLSGGWKMKVALARAILFKADILLLDEPTNHLDVVNVKWITDYLVNLKTATAIIVSHDSKFLNDVCTDILHLNRFKIKRYPGNLDAFVKRVPEARAYAELNTGEDYSFKLPDPPLLDGVKTKEKSLIKMKDVVFQYPGTPAPQLRGVSIQLSLASRVAILGPNGSGKSTLVKLIVGDTEPGSGEMWKHPNLVIGYVAQHAFHHIDQHLDKTPLDYMLWRYQTGEDLEEHMKANRALTAEEEAAKKQGEVFVIEGVKRLFDEIVGRKKLKNSFQYEVSFKNMSSADNQWVPRDDLINRGLERAVLAFDSKEAQRLGMNRPLVRKEIENHFEDFGLEREFTSHNTMRGLSGGQKVKVVLAAATWRRPHIIILDEPTNFLDRESLAALIKAIESFQGGVGIITHSKEFSEGTCKEIWAMNDGVLVASGHDWTESNSKGTKLEKKEEDDEYTDAMGNVHKKEKKAKKESASDRRKAKKDRMARKKAGTYDSADELEDL</sequence>